<protein>
    <recommendedName>
        <fullName>Uncharacterized protein E423R</fullName>
        <shortName>pE423R</shortName>
    </recommendedName>
</protein>
<reference key="1">
    <citation type="journal article" date="1994" name="J. Gen. Virol.">
        <title>Nucleotide sequence of a 55 kbp region from the right end of the genome of a pathogenic African swine fever virus isolate (Malawi LIL20/1).</title>
        <authorList>
            <person name="Dixon L.K."/>
            <person name="Twigg S.R.F."/>
            <person name="Baylis S.A."/>
            <person name="Vydelingum S."/>
            <person name="Bristow C."/>
            <person name="Hammond J.M."/>
            <person name="Smith G.L."/>
        </authorList>
    </citation>
    <scope>NUCLEOTIDE SEQUENCE [GENOMIC DNA]</scope>
</reference>
<reference key="2">
    <citation type="submission" date="2003-03" db="EMBL/GenBank/DDBJ databases">
        <title>African swine fever virus genomes.</title>
        <authorList>
            <person name="Kutish G.F."/>
            <person name="Rock D.L."/>
        </authorList>
    </citation>
    <scope>NUCLEOTIDE SEQUENCE [LARGE SCALE GENOMIC DNA]</scope>
</reference>
<organism>
    <name type="scientific">African swine fever virus (isolate Tick/Malawi/Lil 20-1/1983)</name>
    <name type="common">ASFV</name>
    <dbReference type="NCBI Taxonomy" id="10500"/>
    <lineage>
        <taxon>Viruses</taxon>
        <taxon>Varidnaviria</taxon>
        <taxon>Bamfordvirae</taxon>
        <taxon>Nucleocytoviricota</taxon>
        <taxon>Pokkesviricetes</taxon>
        <taxon>Asfuvirales</taxon>
        <taxon>Asfarviridae</taxon>
        <taxon>Asfivirus</taxon>
        <taxon>African swine fever virus</taxon>
    </lineage>
</organism>
<evidence type="ECO:0000250" key="1">
    <source>
        <dbReference type="UniProtKB" id="Q65195"/>
    </source>
</evidence>
<evidence type="ECO:0000305" key="2"/>
<keyword id="KW-0426">Late protein</keyword>
<keyword id="KW-0946">Virion</keyword>
<gene>
    <name type="ordered locus">Mal-135</name>
    <name type="ORF">j14R</name>
</gene>
<organismHost>
    <name type="scientific">Ornithodoros</name>
    <name type="common">relapsing fever ticks</name>
    <dbReference type="NCBI Taxonomy" id="6937"/>
</organismHost>
<organismHost>
    <name type="scientific">Phacochoerus aethiopicus</name>
    <name type="common">Warthog</name>
    <dbReference type="NCBI Taxonomy" id="85517"/>
</organismHost>
<organismHost>
    <name type="scientific">Phacochoerus africanus</name>
    <name type="common">Warthog</name>
    <dbReference type="NCBI Taxonomy" id="41426"/>
</organismHost>
<organismHost>
    <name type="scientific">Potamochoerus larvatus</name>
    <name type="common">Bushpig</name>
    <dbReference type="NCBI Taxonomy" id="273792"/>
</organismHost>
<organismHost>
    <name type="scientific">Sus scrofa</name>
    <name type="common">Pig</name>
    <dbReference type="NCBI Taxonomy" id="9823"/>
</organismHost>
<accession>Q65238</accession>
<comment type="subcellular location">
    <subcellularLocation>
        <location evidence="1">Virion</location>
    </subcellularLocation>
</comment>
<comment type="induction">
    <text evidence="2">Expressed in the late phase of the viral replicative cycle.</text>
</comment>
<comment type="similarity">
    <text evidence="2">Belongs to the asfivirus E423R family.</text>
</comment>
<dbReference type="EMBL" id="X71982">
    <property type="protein sequence ID" value="CAA50834.1"/>
    <property type="molecule type" value="Genomic_DNA"/>
</dbReference>
<dbReference type="EMBL" id="AY261361">
    <property type="status" value="NOT_ANNOTATED_CDS"/>
    <property type="molecule type" value="Genomic_DNA"/>
</dbReference>
<dbReference type="SMR" id="Q65238"/>
<dbReference type="Proteomes" id="UP000000860">
    <property type="component" value="Segment"/>
</dbReference>
<dbReference type="GO" id="GO:0044423">
    <property type="term" value="C:virion component"/>
    <property type="evidence" value="ECO:0007669"/>
    <property type="project" value="UniProtKB-KW"/>
</dbReference>
<name>VF423_ASFM2</name>
<sequence>MLWRNEITEFMDQLSKYSQEILKTFKQLRPSEYKQYNEFLTQVTSLLQKTPEKIPELVDHIFNYLDNVEKICELLVNASSIIISSKIREQVKHGMSFSYKADLDSLADVLSQKQYVLMNLSKNIAAQYFNTCLKQGKSRLDLKAASVFYNSRPRTASSAELYRKMLYAYGSLQEINYYTEKARNKTLDVEESDSMAIIERTARHNLSLMHPLEAMGLTFGATNTDADPEDLKNKTVINLTLPQATESITYHLKSLMQLKKVSTASGLNTNILKAFDNIISTPVKKNKMASKLAPGMDVVFTSDNGKTFFTKNILSKNMLAGPKERVFAYNNLINNLNNSCFIQNHTDFLKQQDSWPFYDAHNFTNKFLMQPIFSGQTRPRLQGAMEAAHVETHLTAFLQSIQPSRPQDPSVLASPKLSALILN</sequence>
<feature type="chain" id="PRO_0000373687" description="Uncharacterized protein E423R">
    <location>
        <begin position="1"/>
        <end position="423"/>
    </location>
</feature>
<proteinExistence type="inferred from homology"/>